<gene>
    <name evidence="1" type="primary">tsaD</name>
    <name type="synonym">gcp</name>
    <name type="ordered locus">TP_0680</name>
</gene>
<feature type="chain" id="PRO_0000096975" description="tRNA N6-adenosine threonylcarbamoyltransferase">
    <location>
        <begin position="1"/>
        <end position="352"/>
    </location>
</feature>
<feature type="binding site" evidence="1">
    <location>
        <position position="111"/>
    </location>
    <ligand>
        <name>Fe cation</name>
        <dbReference type="ChEBI" id="CHEBI:24875"/>
    </ligand>
</feature>
<feature type="binding site" evidence="1">
    <location>
        <position position="115"/>
    </location>
    <ligand>
        <name>Fe cation</name>
        <dbReference type="ChEBI" id="CHEBI:24875"/>
    </ligand>
</feature>
<feature type="binding site" evidence="1">
    <location>
        <begin position="133"/>
        <end position="137"/>
    </location>
    <ligand>
        <name>substrate</name>
    </ligand>
</feature>
<feature type="binding site" evidence="1">
    <location>
        <position position="166"/>
    </location>
    <ligand>
        <name>substrate</name>
    </ligand>
</feature>
<feature type="binding site" evidence="1">
    <location>
        <position position="179"/>
    </location>
    <ligand>
        <name>substrate</name>
    </ligand>
</feature>
<feature type="binding site" evidence="1">
    <location>
        <position position="275"/>
    </location>
    <ligand>
        <name>substrate</name>
    </ligand>
</feature>
<feature type="binding site" evidence="1">
    <location>
        <position position="300"/>
    </location>
    <ligand>
        <name>Fe cation</name>
        <dbReference type="ChEBI" id="CHEBI:24875"/>
    </ligand>
</feature>
<name>TSAD_TREPA</name>
<organism>
    <name type="scientific">Treponema pallidum (strain Nichols)</name>
    <dbReference type="NCBI Taxonomy" id="243276"/>
    <lineage>
        <taxon>Bacteria</taxon>
        <taxon>Pseudomonadati</taxon>
        <taxon>Spirochaetota</taxon>
        <taxon>Spirochaetia</taxon>
        <taxon>Spirochaetales</taxon>
        <taxon>Treponemataceae</taxon>
        <taxon>Treponema</taxon>
    </lineage>
</organism>
<reference key="1">
    <citation type="journal article" date="1998" name="Science">
        <title>Complete genome sequence of Treponema pallidum, the syphilis spirochete.</title>
        <authorList>
            <person name="Fraser C.M."/>
            <person name="Norris S.J."/>
            <person name="Weinstock G.M."/>
            <person name="White O."/>
            <person name="Sutton G.G."/>
            <person name="Dodson R.J."/>
            <person name="Gwinn M.L."/>
            <person name="Hickey E.K."/>
            <person name="Clayton R.A."/>
            <person name="Ketchum K.A."/>
            <person name="Sodergren E."/>
            <person name="Hardham J.M."/>
            <person name="McLeod M.P."/>
            <person name="Salzberg S.L."/>
            <person name="Peterson J.D."/>
            <person name="Khalak H.G."/>
            <person name="Richardson D.L."/>
            <person name="Howell J.K."/>
            <person name="Chidambaram M."/>
            <person name="Utterback T.R."/>
            <person name="McDonald L.A."/>
            <person name="Artiach P."/>
            <person name="Bowman C."/>
            <person name="Cotton M.D."/>
            <person name="Fujii C."/>
            <person name="Garland S.A."/>
            <person name="Hatch B."/>
            <person name="Horst K."/>
            <person name="Roberts K.M."/>
            <person name="Sandusky M."/>
            <person name="Weidman J.F."/>
            <person name="Smith H.O."/>
            <person name="Venter J.C."/>
        </authorList>
    </citation>
    <scope>NUCLEOTIDE SEQUENCE [LARGE SCALE GENOMIC DNA]</scope>
    <source>
        <strain>Nichols</strain>
    </source>
</reference>
<accession>O83686</accession>
<dbReference type="EC" id="2.3.1.234" evidence="1"/>
<dbReference type="EMBL" id="AE000520">
    <property type="protein sequence ID" value="AAC65643.1"/>
    <property type="molecule type" value="Genomic_DNA"/>
</dbReference>
<dbReference type="PIR" id="H71294">
    <property type="entry name" value="H71294"/>
</dbReference>
<dbReference type="RefSeq" id="WP_010882125.1">
    <property type="nucleotide sequence ID" value="NC_021490.2"/>
</dbReference>
<dbReference type="SMR" id="O83686"/>
<dbReference type="STRING" id="243276.TP_0680"/>
<dbReference type="EnsemblBacteria" id="AAC65643">
    <property type="protein sequence ID" value="AAC65643"/>
    <property type="gene ID" value="TP_0680"/>
</dbReference>
<dbReference type="GeneID" id="93876449"/>
<dbReference type="KEGG" id="tpa:TP_0680"/>
<dbReference type="KEGG" id="tpw:TPANIC_0680"/>
<dbReference type="eggNOG" id="COG0533">
    <property type="taxonomic scope" value="Bacteria"/>
</dbReference>
<dbReference type="HOGENOM" id="CLU_023208_0_2_12"/>
<dbReference type="OrthoDB" id="9806197at2"/>
<dbReference type="Proteomes" id="UP000000811">
    <property type="component" value="Chromosome"/>
</dbReference>
<dbReference type="GO" id="GO:0005737">
    <property type="term" value="C:cytoplasm"/>
    <property type="evidence" value="ECO:0007669"/>
    <property type="project" value="UniProtKB-SubCell"/>
</dbReference>
<dbReference type="GO" id="GO:0005506">
    <property type="term" value="F:iron ion binding"/>
    <property type="evidence" value="ECO:0007669"/>
    <property type="project" value="UniProtKB-UniRule"/>
</dbReference>
<dbReference type="GO" id="GO:0061711">
    <property type="term" value="F:N(6)-L-threonylcarbamoyladenine synthase activity"/>
    <property type="evidence" value="ECO:0007669"/>
    <property type="project" value="UniProtKB-EC"/>
</dbReference>
<dbReference type="GO" id="GO:0002949">
    <property type="term" value="P:tRNA threonylcarbamoyladenosine modification"/>
    <property type="evidence" value="ECO:0007669"/>
    <property type="project" value="UniProtKB-UniRule"/>
</dbReference>
<dbReference type="CDD" id="cd24133">
    <property type="entry name" value="ASKHA_NBD_TsaD_bac"/>
    <property type="match status" value="1"/>
</dbReference>
<dbReference type="FunFam" id="3.30.420.40:FF:000012">
    <property type="entry name" value="tRNA N6-adenosine threonylcarbamoyltransferase"/>
    <property type="match status" value="1"/>
</dbReference>
<dbReference type="Gene3D" id="3.30.420.40">
    <property type="match status" value="2"/>
</dbReference>
<dbReference type="HAMAP" id="MF_01445">
    <property type="entry name" value="TsaD"/>
    <property type="match status" value="1"/>
</dbReference>
<dbReference type="InterPro" id="IPR043129">
    <property type="entry name" value="ATPase_NBD"/>
</dbReference>
<dbReference type="InterPro" id="IPR000905">
    <property type="entry name" value="Gcp-like_dom"/>
</dbReference>
<dbReference type="InterPro" id="IPR017861">
    <property type="entry name" value="KAE1/TsaD"/>
</dbReference>
<dbReference type="InterPro" id="IPR017860">
    <property type="entry name" value="Peptidase_M22_CS"/>
</dbReference>
<dbReference type="InterPro" id="IPR022450">
    <property type="entry name" value="TsaD"/>
</dbReference>
<dbReference type="NCBIfam" id="TIGR00329">
    <property type="entry name" value="gcp_kae1"/>
    <property type="match status" value="1"/>
</dbReference>
<dbReference type="NCBIfam" id="TIGR03723">
    <property type="entry name" value="T6A_TsaD_YgjD"/>
    <property type="match status" value="1"/>
</dbReference>
<dbReference type="PANTHER" id="PTHR11735">
    <property type="entry name" value="TRNA N6-ADENOSINE THREONYLCARBAMOYLTRANSFERASE"/>
    <property type="match status" value="1"/>
</dbReference>
<dbReference type="PANTHER" id="PTHR11735:SF6">
    <property type="entry name" value="TRNA N6-ADENOSINE THREONYLCARBAMOYLTRANSFERASE, MITOCHONDRIAL"/>
    <property type="match status" value="1"/>
</dbReference>
<dbReference type="Pfam" id="PF00814">
    <property type="entry name" value="TsaD"/>
    <property type="match status" value="1"/>
</dbReference>
<dbReference type="PRINTS" id="PR00789">
    <property type="entry name" value="OSIALOPTASE"/>
</dbReference>
<dbReference type="SUPFAM" id="SSF53067">
    <property type="entry name" value="Actin-like ATPase domain"/>
    <property type="match status" value="1"/>
</dbReference>
<dbReference type="PROSITE" id="PS01016">
    <property type="entry name" value="GLYCOPROTEASE"/>
    <property type="match status" value="1"/>
</dbReference>
<proteinExistence type="inferred from homology"/>
<keyword id="KW-0012">Acyltransferase</keyword>
<keyword id="KW-0963">Cytoplasm</keyword>
<keyword id="KW-0408">Iron</keyword>
<keyword id="KW-0479">Metal-binding</keyword>
<keyword id="KW-1185">Reference proteome</keyword>
<keyword id="KW-0808">Transferase</keyword>
<keyword id="KW-0819">tRNA processing</keyword>
<sequence>MNVLGIETSCDETAVAIVKDGTHVCSNVVATQIPFHAPYRGIVPELASRKHIEWILPTVKEALARAQLTLADIDGIAVTHAPGLTGSLLVGLTFAKTLAWSMHLPFIAVNHLHAHFCAAHVEHDLAYPYVGLLASGGHALVCVVHDFDQVEALGATIDDAPGEAFDKVAAFYGFGYPGGKVIETLAEQGDARAARFPLPHFHGKGHRYDVSYSGLKTAVIHQLDHFWNKEYERTAQNIAAAFQACAINILLRPLARALQDTGLPTAVVCGGVAANSLLRKSVADWKHARCVFPSREYCTDNAVMVAALGYRYLIRGDRSFYGVTERSRIAHFSKRGGDRLAAQRSAASQPLF</sequence>
<comment type="function">
    <text evidence="1">Required for the formation of a threonylcarbamoyl group on adenosine at position 37 (t(6)A37) in tRNAs that read codons beginning with adenine. Is involved in the transfer of the threonylcarbamoyl moiety of threonylcarbamoyl-AMP (TC-AMP) to the N6 group of A37, together with TsaE and TsaB. TsaD likely plays a direct catalytic role in this reaction.</text>
</comment>
<comment type="catalytic activity">
    <reaction evidence="1">
        <text>L-threonylcarbamoyladenylate + adenosine(37) in tRNA = N(6)-L-threonylcarbamoyladenosine(37) in tRNA + AMP + H(+)</text>
        <dbReference type="Rhea" id="RHEA:37059"/>
        <dbReference type="Rhea" id="RHEA-COMP:10162"/>
        <dbReference type="Rhea" id="RHEA-COMP:10163"/>
        <dbReference type="ChEBI" id="CHEBI:15378"/>
        <dbReference type="ChEBI" id="CHEBI:73682"/>
        <dbReference type="ChEBI" id="CHEBI:74411"/>
        <dbReference type="ChEBI" id="CHEBI:74418"/>
        <dbReference type="ChEBI" id="CHEBI:456215"/>
        <dbReference type="EC" id="2.3.1.234"/>
    </reaction>
</comment>
<comment type="cofactor">
    <cofactor evidence="1">
        <name>Fe(2+)</name>
        <dbReference type="ChEBI" id="CHEBI:29033"/>
    </cofactor>
    <text evidence="1">Binds 1 Fe(2+) ion per subunit.</text>
</comment>
<comment type="subcellular location">
    <subcellularLocation>
        <location evidence="1">Cytoplasm</location>
    </subcellularLocation>
</comment>
<comment type="similarity">
    <text evidence="1">Belongs to the KAE1 / TsaD family.</text>
</comment>
<protein>
    <recommendedName>
        <fullName evidence="1">tRNA N6-adenosine threonylcarbamoyltransferase</fullName>
        <ecNumber evidence="1">2.3.1.234</ecNumber>
    </recommendedName>
    <alternativeName>
        <fullName evidence="1">N6-L-threonylcarbamoyladenine synthase</fullName>
        <shortName evidence="1">t(6)A synthase</shortName>
    </alternativeName>
    <alternativeName>
        <fullName evidence="1">t(6)A37 threonylcarbamoyladenosine biosynthesis protein TsaD</fullName>
    </alternativeName>
    <alternativeName>
        <fullName evidence="1">tRNA threonylcarbamoyladenosine biosynthesis protein TsaD</fullName>
    </alternativeName>
</protein>
<evidence type="ECO:0000255" key="1">
    <source>
        <dbReference type="HAMAP-Rule" id="MF_01445"/>
    </source>
</evidence>